<feature type="chain" id="PRO_0000178582" description="Large ribosomal subunit protein bL28">
    <location>
        <begin position="1"/>
        <end position="78"/>
    </location>
</feature>
<accession>Q83GW8</accession>
<gene>
    <name evidence="1" type="primary">rpmB</name>
    <name type="ordered locus">TWT_113</name>
</gene>
<keyword id="KW-1185">Reference proteome</keyword>
<keyword id="KW-0687">Ribonucleoprotein</keyword>
<keyword id="KW-0689">Ribosomal protein</keyword>
<comment type="similarity">
    <text evidence="1">Belongs to the bacterial ribosomal protein bL28 family.</text>
</comment>
<protein>
    <recommendedName>
        <fullName evidence="1">Large ribosomal subunit protein bL28</fullName>
    </recommendedName>
    <alternativeName>
        <fullName evidence="2">50S ribosomal protein L28</fullName>
    </alternativeName>
</protein>
<organism>
    <name type="scientific">Tropheryma whipplei (strain Twist)</name>
    <name type="common">Whipple's bacillus</name>
    <dbReference type="NCBI Taxonomy" id="203267"/>
    <lineage>
        <taxon>Bacteria</taxon>
        <taxon>Bacillati</taxon>
        <taxon>Actinomycetota</taxon>
        <taxon>Actinomycetes</taxon>
        <taxon>Micrococcales</taxon>
        <taxon>Tropherymataceae</taxon>
        <taxon>Tropheryma</taxon>
    </lineage>
</organism>
<name>RL28_TROWT</name>
<evidence type="ECO:0000255" key="1">
    <source>
        <dbReference type="HAMAP-Rule" id="MF_00373"/>
    </source>
</evidence>
<evidence type="ECO:0000305" key="2"/>
<dbReference type="EMBL" id="AE014184">
    <property type="protein sequence ID" value="AAO44210.1"/>
    <property type="molecule type" value="Genomic_DNA"/>
</dbReference>
<dbReference type="RefSeq" id="WP_011096086.1">
    <property type="nucleotide sequence ID" value="NC_004572.3"/>
</dbReference>
<dbReference type="SMR" id="Q83GW8"/>
<dbReference type="STRING" id="203267.TWT_113"/>
<dbReference type="GeneID" id="67387897"/>
<dbReference type="KEGG" id="twh:TWT_113"/>
<dbReference type="eggNOG" id="COG0227">
    <property type="taxonomic scope" value="Bacteria"/>
</dbReference>
<dbReference type="HOGENOM" id="CLU_064548_3_1_11"/>
<dbReference type="OrthoDB" id="9805609at2"/>
<dbReference type="Proteomes" id="UP000002200">
    <property type="component" value="Chromosome"/>
</dbReference>
<dbReference type="GO" id="GO:1990904">
    <property type="term" value="C:ribonucleoprotein complex"/>
    <property type="evidence" value="ECO:0007669"/>
    <property type="project" value="UniProtKB-KW"/>
</dbReference>
<dbReference type="GO" id="GO:0005840">
    <property type="term" value="C:ribosome"/>
    <property type="evidence" value="ECO:0007669"/>
    <property type="project" value="UniProtKB-KW"/>
</dbReference>
<dbReference type="GO" id="GO:0003735">
    <property type="term" value="F:structural constituent of ribosome"/>
    <property type="evidence" value="ECO:0007669"/>
    <property type="project" value="InterPro"/>
</dbReference>
<dbReference type="GO" id="GO:0006412">
    <property type="term" value="P:translation"/>
    <property type="evidence" value="ECO:0007669"/>
    <property type="project" value="UniProtKB-UniRule"/>
</dbReference>
<dbReference type="FunFam" id="2.30.170.40:FF:000001">
    <property type="entry name" value="50S ribosomal protein L28"/>
    <property type="match status" value="1"/>
</dbReference>
<dbReference type="Gene3D" id="2.30.170.40">
    <property type="entry name" value="Ribosomal protein L28/L24"/>
    <property type="match status" value="1"/>
</dbReference>
<dbReference type="HAMAP" id="MF_00373">
    <property type="entry name" value="Ribosomal_bL28"/>
    <property type="match status" value="1"/>
</dbReference>
<dbReference type="InterPro" id="IPR026569">
    <property type="entry name" value="Ribosomal_bL28"/>
</dbReference>
<dbReference type="InterPro" id="IPR034704">
    <property type="entry name" value="Ribosomal_bL28/bL31-like_sf"/>
</dbReference>
<dbReference type="InterPro" id="IPR001383">
    <property type="entry name" value="Ribosomal_bL28_bact-type"/>
</dbReference>
<dbReference type="InterPro" id="IPR037147">
    <property type="entry name" value="Ribosomal_bL28_sf"/>
</dbReference>
<dbReference type="NCBIfam" id="TIGR00009">
    <property type="entry name" value="L28"/>
    <property type="match status" value="1"/>
</dbReference>
<dbReference type="PANTHER" id="PTHR13528">
    <property type="entry name" value="39S RIBOSOMAL PROTEIN L28, MITOCHONDRIAL"/>
    <property type="match status" value="1"/>
</dbReference>
<dbReference type="PANTHER" id="PTHR13528:SF2">
    <property type="entry name" value="LARGE RIBOSOMAL SUBUNIT PROTEIN BL28M"/>
    <property type="match status" value="1"/>
</dbReference>
<dbReference type="Pfam" id="PF00830">
    <property type="entry name" value="Ribosomal_L28"/>
    <property type="match status" value="1"/>
</dbReference>
<dbReference type="SUPFAM" id="SSF143800">
    <property type="entry name" value="L28p-like"/>
    <property type="match status" value="1"/>
</dbReference>
<sequence length="78" mass="8769">MSSVCQVTGASPGFGYAVSHSHRRTKRRFDPNVRRRTFYVATLGRRVTLNVSVKGLRLIDKRGIDAVVRDLIKKGVKL</sequence>
<reference key="1">
    <citation type="journal article" date="2003" name="Genome Res.">
        <title>Tropheryma whipplei twist: a human pathogenic Actinobacteria with a reduced genome.</title>
        <authorList>
            <person name="Raoult D."/>
            <person name="Ogata H."/>
            <person name="Audic S."/>
            <person name="Robert C."/>
            <person name="Suhre K."/>
            <person name="Drancourt M."/>
            <person name="Claverie J.-M."/>
        </authorList>
    </citation>
    <scope>NUCLEOTIDE SEQUENCE [LARGE SCALE GENOMIC DNA]</scope>
    <source>
        <strain>Twist</strain>
    </source>
</reference>
<proteinExistence type="inferred from homology"/>